<gene>
    <name type="ORF">SPAC15E1.05c</name>
</gene>
<keyword id="KW-0444">Lipid biosynthesis</keyword>
<keyword id="KW-0443">Lipid metabolism</keyword>
<keyword id="KW-0548">Nucleotidyltransferase</keyword>
<keyword id="KW-0594">Phospholipid biosynthesis</keyword>
<keyword id="KW-1208">Phospholipid metabolism</keyword>
<keyword id="KW-1185">Reference proteome</keyword>
<keyword id="KW-0808">Transferase</keyword>
<dbReference type="EC" id="2.7.7.14"/>
<dbReference type="EMBL" id="CU329670">
    <property type="protein sequence ID" value="CAB52424.1"/>
    <property type="molecule type" value="Genomic_DNA"/>
</dbReference>
<dbReference type="EMBL" id="D89199">
    <property type="protein sequence ID" value="BAA13860.1"/>
    <property type="status" value="ALT_FRAME"/>
    <property type="molecule type" value="mRNA"/>
</dbReference>
<dbReference type="PIR" id="T37720">
    <property type="entry name" value="T37720"/>
</dbReference>
<dbReference type="PIR" id="T42999">
    <property type="entry name" value="T42999"/>
</dbReference>
<dbReference type="RefSeq" id="NP_594306.1">
    <property type="nucleotide sequence ID" value="NM_001019729.2"/>
</dbReference>
<dbReference type="SMR" id="Q9UTI6"/>
<dbReference type="BioGRID" id="279224">
    <property type="interactions" value="3"/>
</dbReference>
<dbReference type="FunCoup" id="Q9UTI6">
    <property type="interactions" value="599"/>
</dbReference>
<dbReference type="STRING" id="284812.Q9UTI6"/>
<dbReference type="PaxDb" id="4896-SPAC15E1.05c.1"/>
<dbReference type="EnsemblFungi" id="SPAC15E1.05c.1">
    <property type="protein sequence ID" value="SPAC15E1.05c.1:pep"/>
    <property type="gene ID" value="SPAC15E1.05c"/>
</dbReference>
<dbReference type="PomBase" id="SPAC15E1.05c"/>
<dbReference type="VEuPathDB" id="FungiDB:SPAC15E1.05c"/>
<dbReference type="eggNOG" id="KOG2803">
    <property type="taxonomic scope" value="Eukaryota"/>
</dbReference>
<dbReference type="HOGENOM" id="CLU_031246_2_2_1"/>
<dbReference type="InParanoid" id="Q9UTI6"/>
<dbReference type="OMA" id="QCKYINA"/>
<dbReference type="PhylomeDB" id="Q9UTI6"/>
<dbReference type="Reactome" id="R-SPO-1483213">
    <property type="pathway name" value="Synthesis of PE"/>
</dbReference>
<dbReference type="UniPathway" id="UPA00558">
    <property type="reaction ID" value="UER00742"/>
</dbReference>
<dbReference type="PRO" id="PR:Q9UTI6"/>
<dbReference type="Proteomes" id="UP000002485">
    <property type="component" value="Chromosome I"/>
</dbReference>
<dbReference type="GO" id="GO:0005737">
    <property type="term" value="C:cytoplasm"/>
    <property type="evidence" value="ECO:0000318"/>
    <property type="project" value="GO_Central"/>
</dbReference>
<dbReference type="GO" id="GO:0005829">
    <property type="term" value="C:cytosol"/>
    <property type="evidence" value="ECO:0007005"/>
    <property type="project" value="PomBase"/>
</dbReference>
<dbReference type="GO" id="GO:0005634">
    <property type="term" value="C:nucleus"/>
    <property type="evidence" value="ECO:0007005"/>
    <property type="project" value="PomBase"/>
</dbReference>
<dbReference type="GO" id="GO:0004306">
    <property type="term" value="F:ethanolamine-phosphate cytidylyltransferase activity"/>
    <property type="evidence" value="ECO:0000318"/>
    <property type="project" value="GO_Central"/>
</dbReference>
<dbReference type="GO" id="GO:0006646">
    <property type="term" value="P:phosphatidylethanolamine biosynthetic process"/>
    <property type="evidence" value="ECO:0000318"/>
    <property type="project" value="GO_Central"/>
</dbReference>
<dbReference type="CDD" id="cd02174">
    <property type="entry name" value="CCT"/>
    <property type="match status" value="1"/>
</dbReference>
<dbReference type="Gene3D" id="3.40.50.620">
    <property type="entry name" value="HUPs"/>
    <property type="match status" value="2"/>
</dbReference>
<dbReference type="InterPro" id="IPR041723">
    <property type="entry name" value="CCT"/>
</dbReference>
<dbReference type="InterPro" id="IPR004821">
    <property type="entry name" value="Cyt_trans-like"/>
</dbReference>
<dbReference type="InterPro" id="IPR044608">
    <property type="entry name" value="Ect1/PCYT2"/>
</dbReference>
<dbReference type="InterPro" id="IPR014729">
    <property type="entry name" value="Rossmann-like_a/b/a_fold"/>
</dbReference>
<dbReference type="NCBIfam" id="TIGR00125">
    <property type="entry name" value="cyt_tran_rel"/>
    <property type="match status" value="1"/>
</dbReference>
<dbReference type="PANTHER" id="PTHR45780">
    <property type="entry name" value="ETHANOLAMINE-PHOSPHATE CYTIDYLYLTRANSFERASE"/>
    <property type="match status" value="1"/>
</dbReference>
<dbReference type="PANTHER" id="PTHR45780:SF2">
    <property type="entry name" value="ETHANOLAMINE-PHOSPHATE CYTIDYLYLTRANSFERASE"/>
    <property type="match status" value="1"/>
</dbReference>
<dbReference type="Pfam" id="PF01467">
    <property type="entry name" value="CTP_transf_like"/>
    <property type="match status" value="1"/>
</dbReference>
<dbReference type="SUPFAM" id="SSF52374">
    <property type="entry name" value="Nucleotidylyl transferase"/>
    <property type="match status" value="2"/>
</dbReference>
<sequence>MASSSNIKHRLWLDGCMDFFHYGHSNAILQAKQLGETLVIGIHSDEEITLNKGPPVMTLEERCLSANTCKWVDEVVPSAPYVFDLEWMRRYGCQYVVHGDDISTDANGDDCYRFAKAADQYLEVKRTEGVSTTELLDRLLSSVPLEIYSTPVSVLSSQIDLLRRFATDSDGLTPFTDVFIYNTEKPETLISGTTLLRLNPEKNIIYIDGDWDLFTEKHISALELCTRMFPGIPIMAGIFADEKCFEKPMLNLLERILNLLQCKYISSILVGPPPASLFASSKYIKLCFDEQISKVYYPIFSTDVSIPALDISLSNTPNNSFYKFDKLGSDLIKQRVMLRRQHYEERQRRKMGKNATEQTTIKTYA</sequence>
<accession>Q9UTI6</accession>
<accession>P78849</accession>
<proteinExistence type="evidence at transcript level"/>
<organism>
    <name type="scientific">Schizosaccharomyces pombe (strain 972 / ATCC 24843)</name>
    <name type="common">Fission yeast</name>
    <dbReference type="NCBI Taxonomy" id="284812"/>
    <lineage>
        <taxon>Eukaryota</taxon>
        <taxon>Fungi</taxon>
        <taxon>Dikarya</taxon>
        <taxon>Ascomycota</taxon>
        <taxon>Taphrinomycotina</taxon>
        <taxon>Schizosaccharomycetes</taxon>
        <taxon>Schizosaccharomycetales</taxon>
        <taxon>Schizosaccharomycetaceae</taxon>
        <taxon>Schizosaccharomyces</taxon>
    </lineage>
</organism>
<feature type="chain" id="PRO_0000208464" description="Probable ethanolamine-phosphate cytidylyltransferase">
    <location>
        <begin position="1"/>
        <end position="365"/>
    </location>
</feature>
<feature type="region of interest" description="Disordered" evidence="1">
    <location>
        <begin position="344"/>
        <end position="365"/>
    </location>
</feature>
<feature type="compositionally biased region" description="Polar residues" evidence="1">
    <location>
        <begin position="355"/>
        <end position="365"/>
    </location>
</feature>
<feature type="sequence conflict" description="In Ref. 2; BAA13860." evidence="2" ref="2">
    <original>C</original>
    <variation>G</variation>
    <location>
        <position position="63"/>
    </location>
</feature>
<feature type="sequence conflict" description="In Ref. 2; BAA13860." evidence="2" ref="2">
    <original>I</original>
    <variation>L</variation>
    <location>
        <position position="268"/>
    </location>
</feature>
<comment type="catalytic activity">
    <reaction>
        <text>phosphoethanolamine + CTP + H(+) = CDP-ethanolamine + diphosphate</text>
        <dbReference type="Rhea" id="RHEA:24592"/>
        <dbReference type="ChEBI" id="CHEBI:15378"/>
        <dbReference type="ChEBI" id="CHEBI:33019"/>
        <dbReference type="ChEBI" id="CHEBI:37563"/>
        <dbReference type="ChEBI" id="CHEBI:57876"/>
        <dbReference type="ChEBI" id="CHEBI:58190"/>
        <dbReference type="EC" id="2.7.7.14"/>
    </reaction>
</comment>
<comment type="pathway">
    <text>Phospholipid metabolism; phosphatidylethanolamine biosynthesis; phosphatidylethanolamine from ethanolamine: step 2/3.</text>
</comment>
<comment type="similarity">
    <text evidence="2">Belongs to the cytidylyltransferase family.</text>
</comment>
<comment type="sequence caution" evidence="2">
    <conflict type="frameshift">
        <sequence resource="EMBL-CDS" id="BAA13860"/>
    </conflict>
</comment>
<reference key="1">
    <citation type="journal article" date="2002" name="Nature">
        <title>The genome sequence of Schizosaccharomyces pombe.</title>
        <authorList>
            <person name="Wood V."/>
            <person name="Gwilliam R."/>
            <person name="Rajandream M.A."/>
            <person name="Lyne M.H."/>
            <person name="Lyne R."/>
            <person name="Stewart A."/>
            <person name="Sgouros J.G."/>
            <person name="Peat N."/>
            <person name="Hayles J."/>
            <person name="Baker S.G."/>
            <person name="Basham D."/>
            <person name="Bowman S."/>
            <person name="Brooks K."/>
            <person name="Brown D."/>
            <person name="Brown S."/>
            <person name="Chillingworth T."/>
            <person name="Churcher C.M."/>
            <person name="Collins M."/>
            <person name="Connor R."/>
            <person name="Cronin A."/>
            <person name="Davis P."/>
            <person name="Feltwell T."/>
            <person name="Fraser A."/>
            <person name="Gentles S."/>
            <person name="Goble A."/>
            <person name="Hamlin N."/>
            <person name="Harris D.E."/>
            <person name="Hidalgo J."/>
            <person name="Hodgson G."/>
            <person name="Holroyd S."/>
            <person name="Hornsby T."/>
            <person name="Howarth S."/>
            <person name="Huckle E.J."/>
            <person name="Hunt S."/>
            <person name="Jagels K."/>
            <person name="James K.D."/>
            <person name="Jones L."/>
            <person name="Jones M."/>
            <person name="Leather S."/>
            <person name="McDonald S."/>
            <person name="McLean J."/>
            <person name="Mooney P."/>
            <person name="Moule S."/>
            <person name="Mungall K.L."/>
            <person name="Murphy L.D."/>
            <person name="Niblett D."/>
            <person name="Odell C."/>
            <person name="Oliver K."/>
            <person name="O'Neil S."/>
            <person name="Pearson D."/>
            <person name="Quail M.A."/>
            <person name="Rabbinowitsch E."/>
            <person name="Rutherford K.M."/>
            <person name="Rutter S."/>
            <person name="Saunders D."/>
            <person name="Seeger K."/>
            <person name="Sharp S."/>
            <person name="Skelton J."/>
            <person name="Simmonds M.N."/>
            <person name="Squares R."/>
            <person name="Squares S."/>
            <person name="Stevens K."/>
            <person name="Taylor K."/>
            <person name="Taylor R.G."/>
            <person name="Tivey A."/>
            <person name="Walsh S.V."/>
            <person name="Warren T."/>
            <person name="Whitehead S."/>
            <person name="Woodward J.R."/>
            <person name="Volckaert G."/>
            <person name="Aert R."/>
            <person name="Robben J."/>
            <person name="Grymonprez B."/>
            <person name="Weltjens I."/>
            <person name="Vanstreels E."/>
            <person name="Rieger M."/>
            <person name="Schaefer M."/>
            <person name="Mueller-Auer S."/>
            <person name="Gabel C."/>
            <person name="Fuchs M."/>
            <person name="Duesterhoeft A."/>
            <person name="Fritzc C."/>
            <person name="Holzer E."/>
            <person name="Moestl D."/>
            <person name="Hilbert H."/>
            <person name="Borzym K."/>
            <person name="Langer I."/>
            <person name="Beck A."/>
            <person name="Lehrach H."/>
            <person name="Reinhardt R."/>
            <person name="Pohl T.M."/>
            <person name="Eger P."/>
            <person name="Zimmermann W."/>
            <person name="Wedler H."/>
            <person name="Wambutt R."/>
            <person name="Purnelle B."/>
            <person name="Goffeau A."/>
            <person name="Cadieu E."/>
            <person name="Dreano S."/>
            <person name="Gloux S."/>
            <person name="Lelaure V."/>
            <person name="Mottier S."/>
            <person name="Galibert F."/>
            <person name="Aves S.J."/>
            <person name="Xiang Z."/>
            <person name="Hunt C."/>
            <person name="Moore K."/>
            <person name="Hurst S.M."/>
            <person name="Lucas M."/>
            <person name="Rochet M."/>
            <person name="Gaillardin C."/>
            <person name="Tallada V.A."/>
            <person name="Garzon A."/>
            <person name="Thode G."/>
            <person name="Daga R.R."/>
            <person name="Cruzado L."/>
            <person name="Jimenez J."/>
            <person name="Sanchez M."/>
            <person name="del Rey F."/>
            <person name="Benito J."/>
            <person name="Dominguez A."/>
            <person name="Revuelta J.L."/>
            <person name="Moreno S."/>
            <person name="Armstrong J."/>
            <person name="Forsburg S.L."/>
            <person name="Cerutti L."/>
            <person name="Lowe T."/>
            <person name="McCombie W.R."/>
            <person name="Paulsen I."/>
            <person name="Potashkin J."/>
            <person name="Shpakovski G.V."/>
            <person name="Ussery D."/>
            <person name="Barrell B.G."/>
            <person name="Nurse P."/>
        </authorList>
    </citation>
    <scope>NUCLEOTIDE SEQUENCE [LARGE SCALE GENOMIC DNA]</scope>
    <source>
        <strain>972 / ATCC 24843</strain>
    </source>
</reference>
<reference key="2">
    <citation type="journal article" date="1997" name="DNA Res.">
        <title>Identification of open reading frames in Schizosaccharomyces pombe cDNAs.</title>
        <authorList>
            <person name="Yoshioka S."/>
            <person name="Kato K."/>
            <person name="Nakai K."/>
            <person name="Okayama H."/>
            <person name="Nojima H."/>
        </authorList>
    </citation>
    <scope>NUCLEOTIDE SEQUENCE [LARGE SCALE MRNA] OF 39-365</scope>
    <source>
        <strain>PR745</strain>
    </source>
</reference>
<evidence type="ECO:0000256" key="1">
    <source>
        <dbReference type="SAM" id="MobiDB-lite"/>
    </source>
</evidence>
<evidence type="ECO:0000305" key="2"/>
<name>ECT1_SCHPO</name>
<protein>
    <recommendedName>
        <fullName>Probable ethanolamine-phosphate cytidylyltransferase</fullName>
        <ecNumber>2.7.7.14</ecNumber>
    </recommendedName>
    <alternativeName>
        <fullName>CTP:phosphoethanolamine cytidylyltransferase</fullName>
    </alternativeName>
    <alternativeName>
        <fullName>Phosphorylethanolamine transferase</fullName>
    </alternativeName>
</protein>